<evidence type="ECO:0000250" key="1"/>
<evidence type="ECO:0000250" key="2">
    <source>
        <dbReference type="UniProtKB" id="Q3UEG6"/>
    </source>
</evidence>
<evidence type="ECO:0000250" key="3">
    <source>
        <dbReference type="UniProtKB" id="Q9BYV1"/>
    </source>
</evidence>
<evidence type="ECO:0000269" key="4">
    <source>
    </source>
</evidence>
<evidence type="ECO:0000269" key="5">
    <source>
    </source>
</evidence>
<evidence type="ECO:0000269" key="6">
    <source>
    </source>
</evidence>
<evidence type="ECO:0000269" key="7">
    <source>
    </source>
</evidence>
<evidence type="ECO:0000303" key="8">
    <source>
    </source>
</evidence>
<evidence type="ECO:0000303" key="9">
    <source>
    </source>
</evidence>
<evidence type="ECO:0000305" key="10"/>
<evidence type="ECO:0000305" key="11">
    <source>
    </source>
</evidence>
<evidence type="ECO:0000305" key="12">
    <source>
    </source>
</evidence>
<protein>
    <recommendedName>
        <fullName>Alanine--glyoxylate aminotransferase 2, mitochondrial</fullName>
        <shortName>AGT 2</shortName>
        <ecNumber evidence="5 7">2.6.1.44</ecNumber>
    </recommendedName>
    <alternativeName>
        <fullName>(R)-3-amino-2-methylpropionate--pyruvate transaminase</fullName>
        <ecNumber evidence="4 6 7">2.6.1.40</ecNumber>
    </alternativeName>
    <alternativeName>
        <fullName evidence="9">Beta-ALAAT II</fullName>
    </alternativeName>
    <alternativeName>
        <fullName>Beta-alanine-pyruvate aminotransferase</fullName>
        <ecNumber evidence="4">2.6.1.18</ecNumber>
    </alternativeName>
    <alternativeName>
        <fullName evidence="9">D-3-aminoisobutyrate-pyruvate aminotransferase</fullName>
    </alternativeName>
    <alternativeName>
        <fullName evidence="8">D-AIBAT</fullName>
    </alternativeName>
    <alternativeName>
        <fullName evidence="8">D-beta-aminoisobutyrate-pyruvate aminotransferase</fullName>
    </alternativeName>
</protein>
<dbReference type="EC" id="2.6.1.44" evidence="5 7"/>
<dbReference type="EC" id="2.6.1.40" evidence="4 6 7"/>
<dbReference type="EC" id="2.6.1.18" evidence="4"/>
<dbReference type="EMBL" id="D38100">
    <property type="protein sequence ID" value="BAA07281.1"/>
    <property type="molecule type" value="mRNA"/>
</dbReference>
<dbReference type="EMBL" id="AB002584">
    <property type="protein sequence ID" value="BAA19549.1"/>
    <property type="molecule type" value="mRNA"/>
</dbReference>
<dbReference type="EMBL" id="BC081765">
    <property type="protein sequence ID" value="AAH81765.1"/>
    <property type="molecule type" value="mRNA"/>
</dbReference>
<dbReference type="RefSeq" id="NP_114023.1">
    <property type="nucleotide sequence ID" value="NM_031835.2"/>
</dbReference>
<dbReference type="SMR" id="Q64565"/>
<dbReference type="FunCoup" id="Q64565">
    <property type="interactions" value="134"/>
</dbReference>
<dbReference type="STRING" id="10116.ENSRNOP00000024035"/>
<dbReference type="iPTMnet" id="Q64565"/>
<dbReference type="PhosphoSitePlus" id="Q64565"/>
<dbReference type="PaxDb" id="10116-ENSRNOP00000024035"/>
<dbReference type="Ensembl" id="ENSRNOT00000024035.8">
    <property type="protein sequence ID" value="ENSRNOP00000024035.5"/>
    <property type="gene ID" value="ENSRNOG00000017821.8"/>
</dbReference>
<dbReference type="GeneID" id="83784"/>
<dbReference type="KEGG" id="rno:83784"/>
<dbReference type="AGR" id="RGD:621767"/>
<dbReference type="CTD" id="64902"/>
<dbReference type="RGD" id="621767">
    <property type="gene designation" value="Agxt2"/>
</dbReference>
<dbReference type="eggNOG" id="KOG1404">
    <property type="taxonomic scope" value="Eukaryota"/>
</dbReference>
<dbReference type="GeneTree" id="ENSGT00940000156125"/>
<dbReference type="HOGENOM" id="CLU_016922_8_0_1"/>
<dbReference type="InParanoid" id="Q64565"/>
<dbReference type="OMA" id="MVPGFKY"/>
<dbReference type="OrthoDB" id="10261433at2759"/>
<dbReference type="BRENDA" id="2.6.1.40">
    <property type="organism ID" value="5301"/>
</dbReference>
<dbReference type="BRENDA" id="2.6.1.44">
    <property type="organism ID" value="5301"/>
</dbReference>
<dbReference type="Reactome" id="R-RNO-389661">
    <property type="pathway name" value="Glyoxylate metabolism and glycine degradation"/>
</dbReference>
<dbReference type="SABIO-RK" id="Q64565"/>
<dbReference type="PRO" id="PR:Q64565"/>
<dbReference type="Proteomes" id="UP000002494">
    <property type="component" value="Chromosome 2"/>
</dbReference>
<dbReference type="Bgee" id="ENSRNOG00000017821">
    <property type="expression patterns" value="Expressed in adult mammalian kidney and 11 other cell types or tissues"/>
</dbReference>
<dbReference type="GO" id="GO:0005759">
    <property type="term" value="C:mitochondrial matrix"/>
    <property type="evidence" value="ECO:0000304"/>
    <property type="project" value="Reactome"/>
</dbReference>
<dbReference type="GO" id="GO:0005739">
    <property type="term" value="C:mitochondrion"/>
    <property type="evidence" value="ECO:0000314"/>
    <property type="project" value="UniProtKB"/>
</dbReference>
<dbReference type="GO" id="GO:0047305">
    <property type="term" value="F:(R)-3-amino-2-methylpropionate-pyruvate transaminase activity"/>
    <property type="evidence" value="ECO:0000314"/>
    <property type="project" value="UniProtKB"/>
</dbReference>
<dbReference type="GO" id="GO:0008453">
    <property type="term" value="F:alanine-glyoxylate transaminase activity"/>
    <property type="evidence" value="ECO:0000314"/>
    <property type="project" value="UniProtKB"/>
</dbReference>
<dbReference type="GO" id="GO:0016223">
    <property type="term" value="F:beta-alanine:pyruvate transaminase activity"/>
    <property type="evidence" value="ECO:0000314"/>
    <property type="project" value="UniProtKB"/>
</dbReference>
<dbReference type="GO" id="GO:0030170">
    <property type="term" value="F:pyridoxal phosphate binding"/>
    <property type="evidence" value="ECO:0007669"/>
    <property type="project" value="InterPro"/>
</dbReference>
<dbReference type="GO" id="GO:0019265">
    <property type="term" value="P:glycine biosynthetic process, by transamination of glyoxylate"/>
    <property type="evidence" value="ECO:0000266"/>
    <property type="project" value="RGD"/>
</dbReference>
<dbReference type="GO" id="GO:0009436">
    <property type="term" value="P:glyoxylate catabolic process"/>
    <property type="evidence" value="ECO:0000266"/>
    <property type="project" value="RGD"/>
</dbReference>
<dbReference type="GO" id="GO:0019481">
    <property type="term" value="P:L-alanine catabolic process, by transamination"/>
    <property type="evidence" value="ECO:0000266"/>
    <property type="project" value="RGD"/>
</dbReference>
<dbReference type="GO" id="GO:2001299">
    <property type="term" value="P:N(omega),N(omega)-dimethyl-L-arginine catabolic process"/>
    <property type="evidence" value="ECO:0000314"/>
    <property type="project" value="UniProtKB"/>
</dbReference>
<dbReference type="GO" id="GO:0045429">
    <property type="term" value="P:positive regulation of nitric oxide biosynthetic process"/>
    <property type="evidence" value="ECO:0000266"/>
    <property type="project" value="RGD"/>
</dbReference>
<dbReference type="CDD" id="cd00610">
    <property type="entry name" value="OAT_like"/>
    <property type="match status" value="1"/>
</dbReference>
<dbReference type="FunFam" id="3.40.640.10:FF:000055">
    <property type="entry name" value="Alanine--glyoxylate aminotransferase 2, mitochondrial"/>
    <property type="match status" value="1"/>
</dbReference>
<dbReference type="FunFam" id="3.90.1150.10:FF:000105">
    <property type="entry name" value="alanine--glyoxylate aminotransferase 2, mitochondrial isoform X3"/>
    <property type="match status" value="1"/>
</dbReference>
<dbReference type="Gene3D" id="3.90.1150.10">
    <property type="entry name" value="Aspartate Aminotransferase, domain 1"/>
    <property type="match status" value="1"/>
</dbReference>
<dbReference type="Gene3D" id="3.40.640.10">
    <property type="entry name" value="Type I PLP-dependent aspartate aminotransferase-like (Major domain)"/>
    <property type="match status" value="1"/>
</dbReference>
<dbReference type="InterPro" id="IPR005814">
    <property type="entry name" value="Aminotrans_3"/>
</dbReference>
<dbReference type="InterPro" id="IPR049704">
    <property type="entry name" value="Aminotrans_3_PPA_site"/>
</dbReference>
<dbReference type="InterPro" id="IPR015424">
    <property type="entry name" value="PyrdxlP-dep_Trfase"/>
</dbReference>
<dbReference type="InterPro" id="IPR015421">
    <property type="entry name" value="PyrdxlP-dep_Trfase_major"/>
</dbReference>
<dbReference type="InterPro" id="IPR015422">
    <property type="entry name" value="PyrdxlP-dep_Trfase_small"/>
</dbReference>
<dbReference type="PANTHER" id="PTHR45688">
    <property type="match status" value="1"/>
</dbReference>
<dbReference type="PANTHER" id="PTHR45688:SF3">
    <property type="entry name" value="ALANINE--GLYOXYLATE AMINOTRANSFERASE 2, MITOCHONDRIAL"/>
    <property type="match status" value="1"/>
</dbReference>
<dbReference type="Pfam" id="PF00202">
    <property type="entry name" value="Aminotran_3"/>
    <property type="match status" value="1"/>
</dbReference>
<dbReference type="PIRSF" id="PIRSF000521">
    <property type="entry name" value="Transaminase_4ab_Lys_Orn"/>
    <property type="match status" value="1"/>
</dbReference>
<dbReference type="SUPFAM" id="SSF53383">
    <property type="entry name" value="PLP-dependent transferases"/>
    <property type="match status" value="1"/>
</dbReference>
<dbReference type="PROSITE" id="PS00600">
    <property type="entry name" value="AA_TRANSFER_CLASS_3"/>
    <property type="match status" value="1"/>
</dbReference>
<accession>Q64565</accession>
<accession>O08616</accession>
<accession>Q642F1</accession>
<proteinExistence type="evidence at protein level"/>
<keyword id="KW-0007">Acetylation</keyword>
<keyword id="KW-0032">Aminotransferase</keyword>
<keyword id="KW-0903">Direct protein sequencing</keyword>
<keyword id="KW-0496">Mitochondrion</keyword>
<keyword id="KW-0663">Pyridoxal phosphate</keyword>
<keyword id="KW-1185">Reference proteome</keyword>
<keyword id="KW-0808">Transferase</keyword>
<keyword id="KW-0809">Transit peptide</keyword>
<reference key="1">
    <citation type="journal article" date="1995" name="J. Biochem.">
        <title>Molecular cloning and sequencing of a cDNA encoding alanine-glyoxylate aminotransferase 2 from rat kidney.</title>
        <authorList>
            <person name="Matsui-Lee I.S."/>
            <person name="Muragaki Y."/>
            <person name="Ideguchi T."/>
            <person name="Hase T."/>
            <person name="Tsuji M."/>
            <person name="Ooshima A."/>
            <person name="Okuno E."/>
            <person name="Kido R."/>
        </authorList>
    </citation>
    <scope>NUCLEOTIDE SEQUENCE [MRNA]</scope>
    <scope>PARTIAL PROTEIN SEQUENCE</scope>
    <source>
        <strain>Wistar</strain>
        <tissue>Kidney</tissue>
    </source>
</reference>
<reference key="2">
    <citation type="journal article" date="2000" name="Methods Enzymol.">
        <title>Purification, properties, and sequencing of aminoisobutyrate aminotransferases from rat liver.</title>
        <authorList>
            <person name="Tamaki N."/>
            <person name="Sakata S.F."/>
            <person name="Matsuda K."/>
        </authorList>
    </citation>
    <scope>NUCLEOTIDE SEQUENCE [MRNA]</scope>
    <scope>PROTEIN SEQUENCE OF 40-57</scope>
    <scope>FUNCTION</scope>
    <scope>CATALYTIC ACTIVITY</scope>
    <scope>ACTIVITY REGULATION</scope>
    <scope>BIOPHYSICOCHEMICAL PROPERTIES</scope>
    <scope>SUBUNIT</scope>
    <scope>COFACTOR</scope>
    <source>
        <strain>Sprague-Dawley</strain>
        <tissue>Liver</tissue>
    </source>
</reference>
<reference key="3">
    <citation type="journal article" date="2004" name="Genome Res.">
        <title>The status, quality, and expansion of the NIH full-length cDNA project: the Mammalian Gene Collection (MGC).</title>
        <authorList>
            <consortium name="The MGC Project Team"/>
        </authorList>
    </citation>
    <scope>NUCLEOTIDE SEQUENCE [LARGE SCALE MRNA]</scope>
    <source>
        <tissue>Kidney</tissue>
    </source>
</reference>
<reference key="4">
    <citation type="journal article" date="1982" name="Biochim. Biophys. Acta">
        <title>Co-purification of alanine-glyoxylate aminotransferase with 2-aminobutyrate aminotransferase in rat kidney.</title>
        <authorList>
            <person name="Okuno E."/>
            <person name="Minatogawa Y."/>
            <person name="Kido R."/>
        </authorList>
    </citation>
    <scope>FUNCTION</scope>
    <scope>CATALYTIC ACTIVITY</scope>
</reference>
<reference key="5">
    <citation type="journal article" date="1990" name="Biochim. Biophys. Acta">
        <title>Further studies on D-3-aminoisobutyrate-pyruvate aminotransferase.</title>
        <authorList>
            <person name="Ueno S."/>
            <person name="Sano A."/>
            <person name="Hineno T."/>
            <person name="Kondoh K."/>
            <person name="Mizuno T."/>
            <person name="Morino H."/>
            <person name="Kakimoto Y."/>
        </authorList>
    </citation>
    <scope>FUNCTION</scope>
    <scope>CATALYTIC ACTIVITY</scope>
    <scope>SUBCELLULAR LOCATION</scope>
    <scope>TISSUE SPECIFICITY</scope>
    <scope>DEVELOPMENTAL STAGE</scope>
</reference>
<reference key="6">
    <citation type="journal article" date="1990" name="J. Biol. Chem.">
        <title>Dimethylarginine:pyruvate aminotransferase in rats. Purification, properties, and identity with alanine:glyoxylate aminotransferase 2.</title>
        <authorList>
            <person name="Ogawa T."/>
            <person name="Kimoto M."/>
            <person name="Sasaoka K."/>
        </authorList>
    </citation>
    <scope>FUNCTION</scope>
    <scope>CATALYTIC ACTIVITY</scope>
    <scope>COFACTOR</scope>
    <scope>SUBUNIT</scope>
    <scope>SUBCELLULAR LOCATION</scope>
    <scope>ACTIVITY REGULATION</scope>
    <scope>BIOPHYSICOCHEMICAL PROPERTIES</scope>
</reference>
<sequence>MSLAWRTLQKAFYLETSLRILQMRPSLSCASRIYVPKLTLHTKHNMPPCDFSPEKYQSLAYNHVLEIHKQHLSPVNTAYFQKPLLLHQGHMEWLFDSEGNRYLDFFSGIVTVGVGHCHPKVTAVAKKQMDRLWHTSSVFFHSPMHEYAERLSALLPEPLKVIFLVNSGSEANDLAMVMARAYSNHTDIISFRGAYHGCSPYTLGLTNVGIYKMKVPSTIACQSTMCPDVFRGPWGGSHCRDSPVQTVRKCSCAPDGCQAKERYIEQFKDTLNTSVATSIAGFFAEPIQGVNGVVQYPKEFLKEAFALVRERGGVCIADEVQTGFGRLGSHFWGFQTHDTMPDIVTMAKGIGNGFPMAAVVTTPEIASSLAKHLHHFSTFGGSPLACAIGSAVLEVIEEENLQRNSQEVGTYMLLKFAKLRDEFDIVGDVRGKGLMVGIEMVQDKISRQPLPKTEVNQIHEDCKDMGLLVGRGGNFSQTFRIAPPMRVTKLEVDFAFEVFRSALTQHMERRAK</sequence>
<feature type="transit peptide" description="Mitochondrion" evidence="4">
    <location>
        <begin position="1"/>
        <end position="39"/>
    </location>
</feature>
<feature type="chain" id="PRO_0000001270" description="Alanine--glyoxylate aminotransferase 2, mitochondrial">
    <location>
        <begin position="40"/>
        <end position="512"/>
    </location>
</feature>
<feature type="modified residue" description="N6-acetyllysine" evidence="2">
    <location>
        <position position="55"/>
    </location>
</feature>
<feature type="modified residue" description="N6-acetyllysine; alternate" evidence="2">
    <location>
        <position position="69"/>
    </location>
</feature>
<feature type="modified residue" description="N6-succinyllysine; alternate" evidence="2">
    <location>
        <position position="69"/>
    </location>
</feature>
<feature type="modified residue" description="N6-acetyllysine" evidence="2">
    <location>
        <position position="82"/>
    </location>
</feature>
<feature type="modified residue" description="N6-acetyllysine; alternate" evidence="2">
    <location>
        <position position="260"/>
    </location>
</feature>
<feature type="modified residue" description="N6-succinyllysine; alternate" evidence="2">
    <location>
        <position position="260"/>
    </location>
</feature>
<feature type="modified residue" description="N6-succinyllysine" evidence="2">
    <location>
        <position position="302"/>
    </location>
</feature>
<feature type="modified residue" description="N6-(pyridoxal phosphate)lysine" evidence="1">
    <location>
        <position position="348"/>
    </location>
</feature>
<feature type="modified residue" description="N6-acetyllysine; alternate" evidence="2">
    <location>
        <position position="415"/>
    </location>
</feature>
<feature type="modified residue" description="N6-succinyllysine; alternate" evidence="2">
    <location>
        <position position="415"/>
    </location>
</feature>
<feature type="modified residue" description="N6-acetyllysine; alternate" evidence="2">
    <location>
        <position position="418"/>
    </location>
</feature>
<feature type="modified residue" description="N6-succinyllysine; alternate" evidence="2">
    <location>
        <position position="418"/>
    </location>
</feature>
<feature type="modified residue" description="N6-acetyllysine" evidence="2">
    <location>
        <position position="452"/>
    </location>
</feature>
<feature type="sequence conflict" description="In Ref. 1; BAA07281." evidence="10" ref="1">
    <original>F</original>
    <variation>L</variation>
    <location>
        <position position="305"/>
    </location>
</feature>
<feature type="sequence conflict" description="In Ref. 1; BAA07281." evidence="10" ref="1">
    <original>W</original>
    <variation>Y</variation>
    <location>
        <position position="332"/>
    </location>
</feature>
<feature type="sequence conflict" description="In Ref. 1; BAA07281." evidence="10" ref="1">
    <original>HD</original>
    <variation>QA</variation>
    <location>
        <begin position="337"/>
        <end position="338"/>
    </location>
</feature>
<feature type="sequence conflict" description="In Ref. 1; BAA07281." evidence="10" ref="1">
    <original>MV</original>
    <variation>WW</variation>
    <location>
        <begin position="435"/>
        <end position="436"/>
    </location>
</feature>
<feature type="sequence conflict" description="In Ref. 1; BAA07281." evidence="10" ref="1">
    <original>FAF</original>
    <variation>LAL</variation>
    <location>
        <begin position="494"/>
        <end position="496"/>
    </location>
</feature>
<name>AGT2_RAT</name>
<organism>
    <name type="scientific">Rattus norvegicus</name>
    <name type="common">Rat</name>
    <dbReference type="NCBI Taxonomy" id="10116"/>
    <lineage>
        <taxon>Eukaryota</taxon>
        <taxon>Metazoa</taxon>
        <taxon>Chordata</taxon>
        <taxon>Craniata</taxon>
        <taxon>Vertebrata</taxon>
        <taxon>Euteleostomi</taxon>
        <taxon>Mammalia</taxon>
        <taxon>Eutheria</taxon>
        <taxon>Euarchontoglires</taxon>
        <taxon>Glires</taxon>
        <taxon>Rodentia</taxon>
        <taxon>Myomorpha</taxon>
        <taxon>Muroidea</taxon>
        <taxon>Muridae</taxon>
        <taxon>Murinae</taxon>
        <taxon>Rattus</taxon>
    </lineage>
</organism>
<comment type="function">
    <text evidence="3 4 5 6 7">Multifunctional aminotransferase with a broad substrate specificity (PubMed:10989446, PubMed:2123486, PubMed:2393662, PubMed:6803844). Catalyzes the conversion of glyoxylate to glycine using alanine as the amino donor (PubMed:2123486, PubMed:6803844). Catalyzes metabolism of not L- but the D-isomer of D-beta-aminoisobutyric acid to generate 2-methyl-3-oxopropanoate and alanine (PubMed:10989446, PubMed:2393662, PubMed:6803844). Catalyzes the transfer of the amino group from beta-alanine to pyruvate to yield L-alanine and 3-oxopropanoate (PubMed:10989446). Can metabolize NG-monomethyl-L-arginine (NMMA), asymmetric NG,NG-dimethyl-L-arginine (ADMA) and symmetric NG,N'G-dimethyl-L-arginine (SDMA) (PubMed:2123486). ADMA is a potent inhibitor of nitric-oxide (NO) synthase, and this activity provides mechanism through which the kidney regulates blood pressure (By similarity).</text>
</comment>
<comment type="catalytic activity">
    <reaction evidence="5 7">
        <text>glyoxylate + L-alanine = glycine + pyruvate</text>
        <dbReference type="Rhea" id="RHEA:24248"/>
        <dbReference type="ChEBI" id="CHEBI:15361"/>
        <dbReference type="ChEBI" id="CHEBI:36655"/>
        <dbReference type="ChEBI" id="CHEBI:57305"/>
        <dbReference type="ChEBI" id="CHEBI:57972"/>
        <dbReference type="EC" id="2.6.1.44"/>
    </reaction>
    <physiologicalReaction direction="left-to-right" evidence="12">
        <dbReference type="Rhea" id="RHEA:24249"/>
    </physiologicalReaction>
</comment>
<comment type="catalytic activity">
    <reaction evidence="4 6 7">
        <text>(R)-3-amino-2-methylpropanoate + pyruvate = 2-methyl-3-oxopropanoate + L-alanine</text>
        <dbReference type="Rhea" id="RHEA:18393"/>
        <dbReference type="ChEBI" id="CHEBI:15361"/>
        <dbReference type="ChEBI" id="CHEBI:57700"/>
        <dbReference type="ChEBI" id="CHEBI:57731"/>
        <dbReference type="ChEBI" id="CHEBI:57972"/>
        <dbReference type="EC" id="2.6.1.40"/>
    </reaction>
    <physiologicalReaction direction="left-to-right" evidence="11">
        <dbReference type="Rhea" id="RHEA:18394"/>
    </physiologicalReaction>
</comment>
<comment type="catalytic activity">
    <reaction evidence="4">
        <text>3-oxopropanoate + L-alanine = beta-alanine + pyruvate</text>
        <dbReference type="Rhea" id="RHEA:14077"/>
        <dbReference type="ChEBI" id="CHEBI:15361"/>
        <dbReference type="ChEBI" id="CHEBI:33190"/>
        <dbReference type="ChEBI" id="CHEBI:57966"/>
        <dbReference type="ChEBI" id="CHEBI:57972"/>
        <dbReference type="EC" id="2.6.1.18"/>
    </reaction>
    <physiologicalReaction direction="right-to-left" evidence="11">
        <dbReference type="Rhea" id="RHEA:14079"/>
    </physiologicalReaction>
</comment>
<comment type="catalytic activity">
    <reaction evidence="5">
        <text>2-oxobutanoate + L-alanine = (2S)-2-aminobutanoate + pyruvate</text>
        <dbReference type="Rhea" id="RHEA:77355"/>
        <dbReference type="ChEBI" id="CHEBI:15361"/>
        <dbReference type="ChEBI" id="CHEBI:16763"/>
        <dbReference type="ChEBI" id="CHEBI:57972"/>
        <dbReference type="ChEBI" id="CHEBI:74359"/>
        <dbReference type="EC" id="2.6.1.44"/>
    </reaction>
</comment>
<comment type="catalytic activity">
    <reaction evidence="5">
        <text>N(omega),N(omega)-dimethyl-L-arginine + pyruvate = 5-(3,3-dimethylguanidino)-2-oxopentanoate + L-alanine</text>
        <dbReference type="Rhea" id="RHEA:77303"/>
        <dbReference type="ChEBI" id="CHEBI:15361"/>
        <dbReference type="ChEBI" id="CHEBI:57972"/>
        <dbReference type="ChEBI" id="CHEBI:58326"/>
        <dbReference type="ChEBI" id="CHEBI:197301"/>
    </reaction>
</comment>
<comment type="catalytic activity">
    <reaction evidence="5">
        <text>N(omega),N('omega)-dimethyl-L-arginine + pyruvate = 5-(3,3'-dimethylguanidino)-2-oxopentanoate + L-alanine</text>
        <dbReference type="Rhea" id="RHEA:77307"/>
        <dbReference type="ChEBI" id="CHEBI:15361"/>
        <dbReference type="ChEBI" id="CHEBI:57972"/>
        <dbReference type="ChEBI" id="CHEBI:197308"/>
        <dbReference type="ChEBI" id="CHEBI:197310"/>
    </reaction>
</comment>
<comment type="catalytic activity">
    <reaction evidence="5">
        <text>N(omega),N(omega)-dimethyl-L-arginine + glyoxylate = 5-(3,3-dimethylguanidino)-2-oxopentanoate + glycine</text>
        <dbReference type="Rhea" id="RHEA:77311"/>
        <dbReference type="ChEBI" id="CHEBI:36655"/>
        <dbReference type="ChEBI" id="CHEBI:57305"/>
        <dbReference type="ChEBI" id="CHEBI:58326"/>
        <dbReference type="ChEBI" id="CHEBI:197301"/>
    </reaction>
</comment>
<comment type="catalytic activity">
    <reaction evidence="5">
        <text>N(omega),N('omega)-dimethyl-L-arginine + glyoxylate = 5-(3,3'-dimethylguanidino)-2-oxopentanoate + glycine</text>
        <dbReference type="Rhea" id="RHEA:77315"/>
        <dbReference type="ChEBI" id="CHEBI:36655"/>
        <dbReference type="ChEBI" id="CHEBI:57305"/>
        <dbReference type="ChEBI" id="CHEBI:197308"/>
        <dbReference type="ChEBI" id="CHEBI:197310"/>
    </reaction>
</comment>
<comment type="catalytic activity">
    <reaction evidence="5">
        <text>N(omega)-methyl-L-arginine + pyruvate = 5-(3-methylguanidino)-2-oxopentanoate + L-alanine</text>
        <dbReference type="Rhea" id="RHEA:77319"/>
        <dbReference type="ChEBI" id="CHEBI:15361"/>
        <dbReference type="ChEBI" id="CHEBI:57972"/>
        <dbReference type="ChEBI" id="CHEBI:114953"/>
        <dbReference type="ChEBI" id="CHEBI:197314"/>
    </reaction>
</comment>
<comment type="catalytic activity">
    <reaction evidence="5">
        <text>N(omega)-methyl-L-arginine + glyoxylate = 5-(3-methylguanidino)-2-oxopentanoate + glycine</text>
        <dbReference type="Rhea" id="RHEA:77323"/>
        <dbReference type="ChEBI" id="CHEBI:36655"/>
        <dbReference type="ChEBI" id="CHEBI:57305"/>
        <dbReference type="ChEBI" id="CHEBI:114953"/>
        <dbReference type="ChEBI" id="CHEBI:197314"/>
    </reaction>
</comment>
<comment type="catalytic activity">
    <reaction evidence="5">
        <text>L-ornithine + pyruvate = 5-amino-2-oxopentanoate + L-alanine</text>
        <dbReference type="Rhea" id="RHEA:77327"/>
        <dbReference type="ChEBI" id="CHEBI:15361"/>
        <dbReference type="ChEBI" id="CHEBI:46911"/>
        <dbReference type="ChEBI" id="CHEBI:57972"/>
        <dbReference type="ChEBI" id="CHEBI:58802"/>
    </reaction>
</comment>
<comment type="catalytic activity">
    <reaction evidence="5">
        <text>L-ornithine + glyoxylate = 5-amino-2-oxopentanoate + glycine</text>
        <dbReference type="Rhea" id="RHEA:77331"/>
        <dbReference type="ChEBI" id="CHEBI:36655"/>
        <dbReference type="ChEBI" id="CHEBI:46911"/>
        <dbReference type="ChEBI" id="CHEBI:57305"/>
        <dbReference type="ChEBI" id="CHEBI:58802"/>
    </reaction>
</comment>
<comment type="catalytic activity">
    <reaction evidence="5">
        <text>(2S)-2-aminobutanoate + glyoxylate = 2-oxobutanoate + glycine</text>
        <dbReference type="Rhea" id="RHEA:77339"/>
        <dbReference type="ChEBI" id="CHEBI:16763"/>
        <dbReference type="ChEBI" id="CHEBI:36655"/>
        <dbReference type="ChEBI" id="CHEBI:57305"/>
        <dbReference type="ChEBI" id="CHEBI:74359"/>
    </reaction>
</comment>
<comment type="catalytic activity">
    <reaction evidence="5">
        <text>N(omega),N(omega)-dimethyl-L-arginine + oxaloacetate = 5-(3,3-dimethylguanidino)-2-oxopentanoate + L-aspartate</text>
        <dbReference type="Rhea" id="RHEA:77343"/>
        <dbReference type="ChEBI" id="CHEBI:16452"/>
        <dbReference type="ChEBI" id="CHEBI:29991"/>
        <dbReference type="ChEBI" id="CHEBI:58326"/>
        <dbReference type="ChEBI" id="CHEBI:197301"/>
    </reaction>
</comment>
<comment type="catalytic activity">
    <reaction evidence="5">
        <text>oxaloacetate + L-alanine = L-aspartate + pyruvate</text>
        <dbReference type="Rhea" id="RHEA:77347"/>
        <dbReference type="ChEBI" id="CHEBI:15361"/>
        <dbReference type="ChEBI" id="CHEBI:16452"/>
        <dbReference type="ChEBI" id="CHEBI:29991"/>
        <dbReference type="ChEBI" id="CHEBI:57972"/>
    </reaction>
</comment>
<comment type="catalytic activity">
    <reaction evidence="5">
        <text>N(omega),N(omega)-dimethyl-L-arginine + 2-oxobutanoate = 5-(3,3-dimethylguanidino)-2-oxopentanoate + (2S)-2-aminobutanoate</text>
        <dbReference type="Rhea" id="RHEA:77351"/>
        <dbReference type="ChEBI" id="CHEBI:16763"/>
        <dbReference type="ChEBI" id="CHEBI:58326"/>
        <dbReference type="ChEBI" id="CHEBI:74359"/>
        <dbReference type="ChEBI" id="CHEBI:197301"/>
    </reaction>
</comment>
<comment type="catalytic activity">
    <reaction evidence="5">
        <text>2-oxopentanoate + N(omega),N(omega)-dimethyl-L-arginine = 5-(3,3-dimethylguanidino)-2-oxopentanoate + L-2-aminopentanoate</text>
        <dbReference type="Rhea" id="RHEA:77359"/>
        <dbReference type="ChEBI" id="CHEBI:28644"/>
        <dbReference type="ChEBI" id="CHEBI:58326"/>
        <dbReference type="ChEBI" id="CHEBI:58441"/>
        <dbReference type="ChEBI" id="CHEBI:197301"/>
    </reaction>
</comment>
<comment type="catalytic activity">
    <reaction evidence="5">
        <text>2-oxohexanoate + N(omega),N(omega)-dimethyl-L-arginine = L-2-aminohexanoate + 5-(3,3-dimethylguanidino)-2-oxopentanoate</text>
        <dbReference type="Rhea" id="RHEA:77363"/>
        <dbReference type="ChEBI" id="CHEBI:35177"/>
        <dbReference type="ChEBI" id="CHEBI:58326"/>
        <dbReference type="ChEBI" id="CHEBI:58455"/>
        <dbReference type="ChEBI" id="CHEBI:197301"/>
    </reaction>
</comment>
<comment type="cofactor">
    <cofactor evidence="4 5">
        <name>pyridoxal 5'-phosphate</name>
        <dbReference type="ChEBI" id="CHEBI:597326"/>
    </cofactor>
</comment>
<comment type="activity regulation">
    <text evidence="4 5">Inhibited by 5-fluorouracil and 6-fluorouracil (PubMed:10989446). Inhibited by phenylhydrazine, hydroxylamine, l-amino-L-proline, para-chloromercuribenzoate and HgCl2 (PubMed:2123486).</text>
</comment>
<comment type="biophysicochemical properties">
    <kinetics>
        <KM evidence="4">0.12 mM for D-beta-aminoisobutyrate</KM>
        <KM evidence="4">1.4 mM for beta-alanine</KM>
        <KM evidence="5">13.7 uM for N(omega),N('omega)-dimethyl-L-arginine (with pyruvate as cosubstrate)</KM>
        <KM evidence="5">11.1 uM for N(omega),N('omega)-dimethyl-L-arginine (with glyoxylate as cosubstrate)</KM>
        <KM evidence="5">9.7 uM for N(omega),N(omega)-dimethyl-L-arginine (with pyruvate as cosubstrate)</KM>
        <KM evidence="5">8 uM for N(omega)-methyl-L-arginine (with pyruvate as cosubstrate)</KM>
        <KM evidence="5">70 uM for L-ornithine (with pyruvate as cosubstrate)</KM>
        <KM evidence="5">7.8 uM for L-alanine (with glyoxylate as cosubstrate)</KM>
        <KM evidence="5">2.2 uM for pyruvate (with N(omega),N('omega)-dimethyl-L-arginine as cosubstrate)</KM>
        <KM evidence="5">2.4 uM for pyruvate (with N(omega),N(omega)-dimethyl-L-arginine as cosubstrate)</KM>
        <KM evidence="5">2.5 uM for pyruvate (with N(omega)-methyl-L-arginine as cosubstrate)</KM>
        <KM evidence="5">4.1 uM for pyruvate (with L-ornithine as cosubstrate)</KM>
        <KM evidence="5">2.9 uM for glyoxylate (with L-alanine as cosubstrate)</KM>
        <KM evidence="5">2.1 uM for glyoxylate (with N(omega),N('omega)-dimethyl-L-arginine as cosubstrate)</KM>
    </kinetics>
    <phDependence>
        <text evidence="4 5">Optimum pH is 9.5 for transamination between L-alanine and glyoxylate. Optimum pH is 10.0 for the transamination between dimethylarginines and pyruvate. Optimum pH is 10.5 for the transamination between L-ornithine and pyruvate.</text>
    </phDependence>
</comment>
<comment type="subunit">
    <text evidence="4 5">Homotetramer.</text>
</comment>
<comment type="subcellular location">
    <subcellularLocation>
        <location evidence="5 6">Mitochondrion</location>
    </subcellularLocation>
</comment>
<comment type="tissue specificity">
    <text evidence="5 6">Expressed in the liver, lung and kidney.</text>
</comment>
<comment type="developmental stage">
    <text evidence="6">Expression is low at birth, increases sharply thereafter for 10 days, and then subsequently declines to the adult level.</text>
</comment>
<comment type="similarity">
    <text evidence="10">Belongs to the class-III pyridoxal-phosphate-dependent aminotransferase family.</text>
</comment>
<gene>
    <name type="primary">Agxt2</name>
    <name type="synonym">Agt2</name>
</gene>